<accession>B8F7G7</accession>
<protein>
    <recommendedName>
        <fullName evidence="1">Regulator of ribonuclease activity A</fullName>
    </recommendedName>
</protein>
<comment type="function">
    <text evidence="1">Globally modulates RNA abundance by binding to RNase E (Rne) and regulating its endonucleolytic activity. Can modulate Rne action in a substrate-dependent manner by altering the composition of the degradosome. Modulates RNA-binding and helicase activities of the degradosome.</text>
</comment>
<comment type="subunit">
    <text evidence="1">Homotrimer. Binds to both RNA-binding sites in the C-terminal region of Rne and to RhlB.</text>
</comment>
<comment type="subcellular location">
    <subcellularLocation>
        <location evidence="1">Cytoplasm</location>
    </subcellularLocation>
</comment>
<comment type="similarity">
    <text evidence="1">Belongs to the RraA family.</text>
</comment>
<proteinExistence type="inferred from homology"/>
<evidence type="ECO:0000255" key="1">
    <source>
        <dbReference type="HAMAP-Rule" id="MF_00471"/>
    </source>
</evidence>
<dbReference type="EMBL" id="CP001321">
    <property type="protein sequence ID" value="ACL33269.1"/>
    <property type="molecule type" value="Genomic_DNA"/>
</dbReference>
<dbReference type="RefSeq" id="WP_005712787.1">
    <property type="nucleotide sequence ID" value="NC_011852.1"/>
</dbReference>
<dbReference type="SMR" id="B8F7G7"/>
<dbReference type="STRING" id="557723.HAPS_1754"/>
<dbReference type="GeneID" id="66618390"/>
<dbReference type="KEGG" id="hap:HAPS_1754"/>
<dbReference type="HOGENOM" id="CLU_072626_4_0_6"/>
<dbReference type="Proteomes" id="UP000006743">
    <property type="component" value="Chromosome"/>
</dbReference>
<dbReference type="GO" id="GO:0005737">
    <property type="term" value="C:cytoplasm"/>
    <property type="evidence" value="ECO:0007669"/>
    <property type="project" value="UniProtKB-SubCell"/>
</dbReference>
<dbReference type="GO" id="GO:0060698">
    <property type="term" value="F:endoribonuclease inhibitor activity"/>
    <property type="evidence" value="ECO:0007669"/>
    <property type="project" value="UniProtKB-UniRule"/>
</dbReference>
<dbReference type="GO" id="GO:0019899">
    <property type="term" value="F:enzyme binding"/>
    <property type="evidence" value="ECO:0007669"/>
    <property type="project" value="UniProtKB-UniRule"/>
</dbReference>
<dbReference type="GO" id="GO:0051252">
    <property type="term" value="P:regulation of RNA metabolic process"/>
    <property type="evidence" value="ECO:0007669"/>
    <property type="project" value="InterPro"/>
</dbReference>
<dbReference type="CDD" id="cd16841">
    <property type="entry name" value="RraA_family"/>
    <property type="match status" value="1"/>
</dbReference>
<dbReference type="Gene3D" id="3.50.30.40">
    <property type="entry name" value="Ribonuclease E inhibitor RraA/RraA-like"/>
    <property type="match status" value="1"/>
</dbReference>
<dbReference type="HAMAP" id="MF_00471">
    <property type="entry name" value="RraA"/>
    <property type="match status" value="1"/>
</dbReference>
<dbReference type="InterPro" id="IPR010203">
    <property type="entry name" value="RraA"/>
</dbReference>
<dbReference type="InterPro" id="IPR005493">
    <property type="entry name" value="RraA/RraA-like"/>
</dbReference>
<dbReference type="InterPro" id="IPR036704">
    <property type="entry name" value="RraA/RraA-like_sf"/>
</dbReference>
<dbReference type="InterPro" id="IPR014339">
    <property type="entry name" value="RraA_gpbac"/>
</dbReference>
<dbReference type="NCBIfam" id="TIGR01935">
    <property type="entry name" value="NOT-MenG"/>
    <property type="match status" value="1"/>
</dbReference>
<dbReference type="NCBIfam" id="NF006875">
    <property type="entry name" value="PRK09372.1"/>
    <property type="match status" value="1"/>
</dbReference>
<dbReference type="NCBIfam" id="TIGR02998">
    <property type="entry name" value="RraA_entero"/>
    <property type="match status" value="1"/>
</dbReference>
<dbReference type="PANTHER" id="PTHR33254">
    <property type="entry name" value="4-HYDROXY-4-METHYL-2-OXOGLUTARATE ALDOLASE 3-RELATED"/>
    <property type="match status" value="1"/>
</dbReference>
<dbReference type="PANTHER" id="PTHR33254:SF29">
    <property type="entry name" value="REGULATOR OF RIBONUCLEASE ACTIVITY A"/>
    <property type="match status" value="1"/>
</dbReference>
<dbReference type="Pfam" id="PF03737">
    <property type="entry name" value="RraA-like"/>
    <property type="match status" value="1"/>
</dbReference>
<dbReference type="SUPFAM" id="SSF89562">
    <property type="entry name" value="RraA-like"/>
    <property type="match status" value="1"/>
</dbReference>
<gene>
    <name evidence="1" type="primary">rraA</name>
    <name type="ordered locus">HAPS_1754</name>
</gene>
<reference key="1">
    <citation type="journal article" date="2009" name="J. Bacteriol.">
        <title>Complete genome sequence of Haemophilus parasuis SH0165.</title>
        <authorList>
            <person name="Yue M."/>
            <person name="Yang F."/>
            <person name="Yang J."/>
            <person name="Bei W."/>
            <person name="Cai X."/>
            <person name="Chen L."/>
            <person name="Dong J."/>
            <person name="Zhou R."/>
            <person name="Jin M."/>
            <person name="Jin Q."/>
            <person name="Chen H."/>
        </authorList>
    </citation>
    <scope>NUCLEOTIDE SEQUENCE [LARGE SCALE GENOMIC DNA]</scope>
    <source>
        <strain>SH0165</strain>
    </source>
</reference>
<sequence length="166" mass="17738">MRVDTSELCDIYSDQVDVVEPIFSSFGGLSSFYGKITTVKCFESNGLIAEVLEEEGQGRVLLVDGGGVVRRALIDAELAQLAVDNGWEGIIVNGAVRQLDVLETLDIGIQALAPIPVGADDSMVGEVDTPVNFGGVTFLPEDYVYADLTGIVLSPELLDLQSEDIE</sequence>
<keyword id="KW-0963">Cytoplasm</keyword>
<keyword id="KW-1185">Reference proteome</keyword>
<organism>
    <name type="scientific">Glaesserella parasuis serovar 5 (strain SH0165)</name>
    <name type="common">Haemophilus parasuis</name>
    <dbReference type="NCBI Taxonomy" id="557723"/>
    <lineage>
        <taxon>Bacteria</taxon>
        <taxon>Pseudomonadati</taxon>
        <taxon>Pseudomonadota</taxon>
        <taxon>Gammaproteobacteria</taxon>
        <taxon>Pasteurellales</taxon>
        <taxon>Pasteurellaceae</taxon>
        <taxon>Glaesserella</taxon>
    </lineage>
</organism>
<feature type="chain" id="PRO_1000135493" description="Regulator of ribonuclease activity A">
    <location>
        <begin position="1"/>
        <end position="166"/>
    </location>
</feature>
<name>RRAA_GLAP5</name>